<reference key="1">
    <citation type="submission" date="2002-12" db="EMBL/GenBank/DDBJ databases">
        <title>Complete genome sequence of Vibrio vulnificus CMCP6.</title>
        <authorList>
            <person name="Rhee J.H."/>
            <person name="Kim S.Y."/>
            <person name="Chung S.S."/>
            <person name="Kim J.J."/>
            <person name="Moon Y.H."/>
            <person name="Jeong H."/>
            <person name="Choy H.E."/>
        </authorList>
    </citation>
    <scope>NUCLEOTIDE SEQUENCE [LARGE SCALE GENOMIC DNA]</scope>
    <source>
        <strain>CMCP6</strain>
    </source>
</reference>
<feature type="chain" id="PRO_0000181204" description="Large ribosomal subunit protein bL27">
    <location>
        <begin position="1"/>
        <end position="85"/>
    </location>
</feature>
<feature type="region of interest" description="Disordered" evidence="2">
    <location>
        <begin position="1"/>
        <end position="22"/>
    </location>
</feature>
<comment type="similarity">
    <text evidence="1">Belongs to the bacterial ribosomal protein bL27 family.</text>
</comment>
<gene>
    <name evidence="1" type="primary">rpmA</name>
    <name type="ordered locus">VV1_0670</name>
</gene>
<protein>
    <recommendedName>
        <fullName evidence="1">Large ribosomal subunit protein bL27</fullName>
    </recommendedName>
    <alternativeName>
        <fullName evidence="3">50S ribosomal protein L27</fullName>
    </alternativeName>
</protein>
<accession>Q8DEC5</accession>
<sequence length="85" mass="9193">MAHKKAGGSTRNGRDSESKRLGVKRFGGESVLAGNIIVRQRGTQFHAGNNVGLGKDHTLFALTDGKVKFEVKGPKNRKFVSIEAE</sequence>
<evidence type="ECO:0000255" key="1">
    <source>
        <dbReference type="HAMAP-Rule" id="MF_00539"/>
    </source>
</evidence>
<evidence type="ECO:0000256" key="2">
    <source>
        <dbReference type="SAM" id="MobiDB-lite"/>
    </source>
</evidence>
<evidence type="ECO:0000305" key="3"/>
<organism>
    <name type="scientific">Vibrio vulnificus (strain CMCP6)</name>
    <dbReference type="NCBI Taxonomy" id="216895"/>
    <lineage>
        <taxon>Bacteria</taxon>
        <taxon>Pseudomonadati</taxon>
        <taxon>Pseudomonadota</taxon>
        <taxon>Gammaproteobacteria</taxon>
        <taxon>Vibrionales</taxon>
        <taxon>Vibrionaceae</taxon>
        <taxon>Vibrio</taxon>
    </lineage>
</organism>
<proteinExistence type="inferred from homology"/>
<keyword id="KW-0687">Ribonucleoprotein</keyword>
<keyword id="KW-0689">Ribosomal protein</keyword>
<dbReference type="EMBL" id="AE016795">
    <property type="protein sequence ID" value="AAO09182.1"/>
    <property type="molecule type" value="Genomic_DNA"/>
</dbReference>
<dbReference type="RefSeq" id="WP_011078749.1">
    <property type="nucleotide sequence ID" value="NC_004459.3"/>
</dbReference>
<dbReference type="SMR" id="Q8DEC5"/>
<dbReference type="GeneID" id="93894977"/>
<dbReference type="KEGG" id="vvu:VV1_0670"/>
<dbReference type="HOGENOM" id="CLU_095424_4_1_6"/>
<dbReference type="Proteomes" id="UP000002275">
    <property type="component" value="Chromosome 1"/>
</dbReference>
<dbReference type="GO" id="GO:0022625">
    <property type="term" value="C:cytosolic large ribosomal subunit"/>
    <property type="evidence" value="ECO:0007669"/>
    <property type="project" value="TreeGrafter"/>
</dbReference>
<dbReference type="GO" id="GO:0003735">
    <property type="term" value="F:structural constituent of ribosome"/>
    <property type="evidence" value="ECO:0007669"/>
    <property type="project" value="InterPro"/>
</dbReference>
<dbReference type="GO" id="GO:0006412">
    <property type="term" value="P:translation"/>
    <property type="evidence" value="ECO:0007669"/>
    <property type="project" value="UniProtKB-UniRule"/>
</dbReference>
<dbReference type="FunFam" id="2.40.50.100:FF:000001">
    <property type="entry name" value="50S ribosomal protein L27"/>
    <property type="match status" value="1"/>
</dbReference>
<dbReference type="Gene3D" id="2.40.50.100">
    <property type="match status" value="1"/>
</dbReference>
<dbReference type="HAMAP" id="MF_00539">
    <property type="entry name" value="Ribosomal_bL27"/>
    <property type="match status" value="1"/>
</dbReference>
<dbReference type="InterPro" id="IPR001684">
    <property type="entry name" value="Ribosomal_bL27"/>
</dbReference>
<dbReference type="InterPro" id="IPR018261">
    <property type="entry name" value="Ribosomal_bL27_CS"/>
</dbReference>
<dbReference type="NCBIfam" id="TIGR00062">
    <property type="entry name" value="L27"/>
    <property type="match status" value="1"/>
</dbReference>
<dbReference type="PANTHER" id="PTHR15893:SF0">
    <property type="entry name" value="LARGE RIBOSOMAL SUBUNIT PROTEIN BL27M"/>
    <property type="match status" value="1"/>
</dbReference>
<dbReference type="PANTHER" id="PTHR15893">
    <property type="entry name" value="RIBOSOMAL PROTEIN L27"/>
    <property type="match status" value="1"/>
</dbReference>
<dbReference type="Pfam" id="PF01016">
    <property type="entry name" value="Ribosomal_L27"/>
    <property type="match status" value="1"/>
</dbReference>
<dbReference type="PRINTS" id="PR00063">
    <property type="entry name" value="RIBOSOMALL27"/>
</dbReference>
<dbReference type="SUPFAM" id="SSF110324">
    <property type="entry name" value="Ribosomal L27 protein-like"/>
    <property type="match status" value="1"/>
</dbReference>
<dbReference type="PROSITE" id="PS00831">
    <property type="entry name" value="RIBOSOMAL_L27"/>
    <property type="match status" value="1"/>
</dbReference>
<name>RL27_VIBVU</name>